<dbReference type="EC" id="2.3.1.180" evidence="1"/>
<dbReference type="EMBL" id="AE014074">
    <property type="protein sequence ID" value="AAM80134.1"/>
    <property type="molecule type" value="Genomic_DNA"/>
</dbReference>
<dbReference type="RefSeq" id="WP_002988609.1">
    <property type="nucleotide sequence ID" value="NC_004070.1"/>
</dbReference>
<dbReference type="SMR" id="P0DB00"/>
<dbReference type="BindingDB" id="P0DB00"/>
<dbReference type="ChEMBL" id="CHEMBL3672"/>
<dbReference type="KEGG" id="spg:SpyM3_1527"/>
<dbReference type="HOGENOM" id="CLU_039592_4_1_9"/>
<dbReference type="UniPathway" id="UPA00094"/>
<dbReference type="Proteomes" id="UP000000564">
    <property type="component" value="Chromosome"/>
</dbReference>
<dbReference type="GO" id="GO:0005737">
    <property type="term" value="C:cytoplasm"/>
    <property type="evidence" value="ECO:0007669"/>
    <property type="project" value="UniProtKB-SubCell"/>
</dbReference>
<dbReference type="GO" id="GO:0004315">
    <property type="term" value="F:3-oxoacyl-[acyl-carrier-protein] synthase activity"/>
    <property type="evidence" value="ECO:0007669"/>
    <property type="project" value="InterPro"/>
</dbReference>
<dbReference type="GO" id="GO:0033818">
    <property type="term" value="F:beta-ketoacyl-acyl-carrier-protein synthase III activity"/>
    <property type="evidence" value="ECO:0007669"/>
    <property type="project" value="UniProtKB-UniRule"/>
</dbReference>
<dbReference type="GO" id="GO:0006633">
    <property type="term" value="P:fatty acid biosynthetic process"/>
    <property type="evidence" value="ECO:0007669"/>
    <property type="project" value="UniProtKB-UniRule"/>
</dbReference>
<dbReference type="CDD" id="cd00830">
    <property type="entry name" value="KAS_III"/>
    <property type="match status" value="1"/>
</dbReference>
<dbReference type="Gene3D" id="3.40.47.10">
    <property type="match status" value="1"/>
</dbReference>
<dbReference type="HAMAP" id="MF_01815">
    <property type="entry name" value="FabH"/>
    <property type="match status" value="1"/>
</dbReference>
<dbReference type="InterPro" id="IPR013747">
    <property type="entry name" value="ACP_syn_III_C"/>
</dbReference>
<dbReference type="InterPro" id="IPR013751">
    <property type="entry name" value="ACP_syn_III_N"/>
</dbReference>
<dbReference type="InterPro" id="IPR004655">
    <property type="entry name" value="FabH"/>
</dbReference>
<dbReference type="InterPro" id="IPR016039">
    <property type="entry name" value="Thiolase-like"/>
</dbReference>
<dbReference type="NCBIfam" id="TIGR00747">
    <property type="entry name" value="fabH"/>
    <property type="match status" value="1"/>
</dbReference>
<dbReference type="NCBIfam" id="NF006829">
    <property type="entry name" value="PRK09352.1"/>
    <property type="match status" value="1"/>
</dbReference>
<dbReference type="PANTHER" id="PTHR43091">
    <property type="entry name" value="3-OXOACYL-[ACYL-CARRIER-PROTEIN] SYNTHASE"/>
    <property type="match status" value="1"/>
</dbReference>
<dbReference type="PANTHER" id="PTHR43091:SF1">
    <property type="entry name" value="BETA-KETOACYL-[ACYL-CARRIER-PROTEIN] SYNTHASE III, CHLOROPLASTIC"/>
    <property type="match status" value="1"/>
</dbReference>
<dbReference type="Pfam" id="PF08545">
    <property type="entry name" value="ACP_syn_III"/>
    <property type="match status" value="1"/>
</dbReference>
<dbReference type="Pfam" id="PF08541">
    <property type="entry name" value="ACP_syn_III_C"/>
    <property type="match status" value="1"/>
</dbReference>
<dbReference type="SUPFAM" id="SSF53901">
    <property type="entry name" value="Thiolase-like"/>
    <property type="match status" value="1"/>
</dbReference>
<sequence>MIFSKISQVAHYVPQQLVTNNDLASIMDTSHEWIFSRTGIAERHISRDEMTSDLAIQVADQLLTQSGLKADAIDFIIVATISPDATMPSTAAKVQAAIAATSAFAFDMTAACSGFVFALAMADKLIASGAYQNGMVIGAETLSKLVNWQDRATAVLFGDGAGGVLLEASKDKHVLAETLHTDGARCQSLISGETSLSSPYSIGKKAIATIQMDGRAIFDFAIRDVSKSILTLMAQSDITKDDIDYCLLHQANRRILDKIARKIDVPREKFLENMMRYGNTSAASIPILLSEAVQKGQIRLDGTQKILLSGFGGGLTWGSLIVKI</sequence>
<name>FABH_STRP3</name>
<organism>
    <name type="scientific">Streptococcus pyogenes serotype M3 (strain ATCC BAA-595 / MGAS315)</name>
    <dbReference type="NCBI Taxonomy" id="198466"/>
    <lineage>
        <taxon>Bacteria</taxon>
        <taxon>Bacillati</taxon>
        <taxon>Bacillota</taxon>
        <taxon>Bacilli</taxon>
        <taxon>Lactobacillales</taxon>
        <taxon>Streptococcaceae</taxon>
        <taxon>Streptococcus</taxon>
    </lineage>
</organism>
<keyword id="KW-0012">Acyltransferase</keyword>
<keyword id="KW-0963">Cytoplasm</keyword>
<keyword id="KW-0275">Fatty acid biosynthesis</keyword>
<keyword id="KW-0276">Fatty acid metabolism</keyword>
<keyword id="KW-0444">Lipid biosynthesis</keyword>
<keyword id="KW-0443">Lipid metabolism</keyword>
<keyword id="KW-0511">Multifunctional enzyme</keyword>
<keyword id="KW-0808">Transferase</keyword>
<proteinExistence type="inferred from homology"/>
<reference key="1">
    <citation type="journal article" date="2002" name="Proc. Natl. Acad. Sci. U.S.A.">
        <title>Genome sequence of a serotype M3 strain of group A Streptococcus: phage-encoded toxins, the high-virulence phenotype, and clone emergence.</title>
        <authorList>
            <person name="Beres S.B."/>
            <person name="Sylva G.L."/>
            <person name="Barbian K.D."/>
            <person name="Lei B."/>
            <person name="Hoff J.S."/>
            <person name="Mammarella N.D."/>
            <person name="Liu M.-Y."/>
            <person name="Smoot J.C."/>
            <person name="Porcella S.F."/>
            <person name="Parkins L.D."/>
            <person name="Campbell D.S."/>
            <person name="Smith T.M."/>
            <person name="McCormick J.K."/>
            <person name="Leung D.Y.M."/>
            <person name="Schlievert P.M."/>
            <person name="Musser J.M."/>
        </authorList>
    </citation>
    <scope>NUCLEOTIDE SEQUENCE [LARGE SCALE GENOMIC DNA]</scope>
    <source>
        <strain>ATCC BAA-595 / MGAS315</strain>
    </source>
</reference>
<evidence type="ECO:0000255" key="1">
    <source>
        <dbReference type="HAMAP-Rule" id="MF_01815"/>
    </source>
</evidence>
<feature type="chain" id="PRO_0000110494" description="Beta-ketoacyl-[acyl-carrier-protein] synthase III">
    <location>
        <begin position="1"/>
        <end position="324"/>
    </location>
</feature>
<feature type="region of interest" description="ACP-binding" evidence="1">
    <location>
        <begin position="250"/>
        <end position="254"/>
    </location>
</feature>
<feature type="active site" evidence="1">
    <location>
        <position position="112"/>
    </location>
</feature>
<feature type="active site" evidence="1">
    <location>
        <position position="249"/>
    </location>
</feature>
<feature type="active site" evidence="1">
    <location>
        <position position="279"/>
    </location>
</feature>
<comment type="function">
    <text evidence="1">Catalyzes the condensation reaction of fatty acid synthesis by the addition to an acyl acceptor of two carbons from malonyl-ACP. Catalyzes the first condensation reaction which initiates fatty acid synthesis and may therefore play a role in governing the total rate of fatty acid production. Possesses both acetoacetyl-ACP synthase and acetyl transacylase activities. Its substrate specificity determines the biosynthesis of branched-chain and/or straight-chain of fatty acids.</text>
</comment>
<comment type="catalytic activity">
    <reaction evidence="1">
        <text>malonyl-[ACP] + acetyl-CoA + H(+) = 3-oxobutanoyl-[ACP] + CO2 + CoA</text>
        <dbReference type="Rhea" id="RHEA:12080"/>
        <dbReference type="Rhea" id="RHEA-COMP:9623"/>
        <dbReference type="Rhea" id="RHEA-COMP:9625"/>
        <dbReference type="ChEBI" id="CHEBI:15378"/>
        <dbReference type="ChEBI" id="CHEBI:16526"/>
        <dbReference type="ChEBI" id="CHEBI:57287"/>
        <dbReference type="ChEBI" id="CHEBI:57288"/>
        <dbReference type="ChEBI" id="CHEBI:78449"/>
        <dbReference type="ChEBI" id="CHEBI:78450"/>
        <dbReference type="EC" id="2.3.1.180"/>
    </reaction>
</comment>
<comment type="pathway">
    <text evidence="1">Lipid metabolism; fatty acid biosynthesis.</text>
</comment>
<comment type="subunit">
    <text evidence="1">Homodimer.</text>
</comment>
<comment type="subcellular location">
    <subcellularLocation>
        <location evidence="1">Cytoplasm</location>
    </subcellularLocation>
</comment>
<comment type="domain">
    <text evidence="1">The last Arg residue of the ACP-binding site is essential for the weak association between ACP/AcpP and FabH.</text>
</comment>
<comment type="similarity">
    <text evidence="1">Belongs to the thiolase-like superfamily. FabH family.</text>
</comment>
<accession>P0DB00</accession>
<accession>P64114</accession>
<accession>Q8NZN0</accession>
<gene>
    <name evidence="1" type="primary">fabH</name>
    <name type="ordered locus">SpyM3_1527</name>
</gene>
<protein>
    <recommendedName>
        <fullName evidence="1">Beta-ketoacyl-[acyl-carrier-protein] synthase III</fullName>
        <shortName evidence="1">Beta-ketoacyl-ACP synthase III</shortName>
        <shortName evidence="1">KAS III</shortName>
        <ecNumber evidence="1">2.3.1.180</ecNumber>
    </recommendedName>
    <alternativeName>
        <fullName evidence="1">3-oxoacyl-[acyl-carrier-protein] synthase 3</fullName>
    </alternativeName>
    <alternativeName>
        <fullName evidence="1">3-oxoacyl-[acyl-carrier-protein] synthase III</fullName>
    </alternativeName>
</protein>